<feature type="chain" id="PRO_0000242507" description="Nucleoside diphosphate kinase">
    <location>
        <begin position="1"/>
        <end position="152"/>
    </location>
</feature>
<feature type="active site" description="Pros-phosphohistidine intermediate" evidence="1">
    <location>
        <position position="117"/>
    </location>
</feature>
<feature type="binding site" evidence="1">
    <location>
        <position position="11"/>
    </location>
    <ligand>
        <name>ATP</name>
        <dbReference type="ChEBI" id="CHEBI:30616"/>
    </ligand>
</feature>
<feature type="binding site" evidence="1">
    <location>
        <position position="59"/>
    </location>
    <ligand>
        <name>ATP</name>
        <dbReference type="ChEBI" id="CHEBI:30616"/>
    </ligand>
</feature>
<feature type="binding site" evidence="1">
    <location>
        <position position="87"/>
    </location>
    <ligand>
        <name>ATP</name>
        <dbReference type="ChEBI" id="CHEBI:30616"/>
    </ligand>
</feature>
<feature type="binding site" evidence="1">
    <location>
        <position position="93"/>
    </location>
    <ligand>
        <name>ATP</name>
        <dbReference type="ChEBI" id="CHEBI:30616"/>
    </ligand>
</feature>
<feature type="binding site" evidence="1">
    <location>
        <position position="104"/>
    </location>
    <ligand>
        <name>ATP</name>
        <dbReference type="ChEBI" id="CHEBI:30616"/>
    </ligand>
</feature>
<feature type="binding site" evidence="1">
    <location>
        <position position="114"/>
    </location>
    <ligand>
        <name>ATP</name>
        <dbReference type="ChEBI" id="CHEBI:30616"/>
    </ligand>
</feature>
<organism>
    <name type="scientific">Prochlorococcus marinus (strain MIT 9312)</name>
    <dbReference type="NCBI Taxonomy" id="74546"/>
    <lineage>
        <taxon>Bacteria</taxon>
        <taxon>Bacillati</taxon>
        <taxon>Cyanobacteriota</taxon>
        <taxon>Cyanophyceae</taxon>
        <taxon>Synechococcales</taxon>
        <taxon>Prochlorococcaceae</taxon>
        <taxon>Prochlorococcus</taxon>
    </lineage>
</organism>
<comment type="function">
    <text evidence="1">Major role in the synthesis of nucleoside triphosphates other than ATP. The ATP gamma phosphate is transferred to the NDP beta phosphate via a ping-pong mechanism, using a phosphorylated active-site intermediate.</text>
</comment>
<comment type="catalytic activity">
    <reaction evidence="1">
        <text>a 2'-deoxyribonucleoside 5'-diphosphate + ATP = a 2'-deoxyribonucleoside 5'-triphosphate + ADP</text>
        <dbReference type="Rhea" id="RHEA:44640"/>
        <dbReference type="ChEBI" id="CHEBI:30616"/>
        <dbReference type="ChEBI" id="CHEBI:61560"/>
        <dbReference type="ChEBI" id="CHEBI:73316"/>
        <dbReference type="ChEBI" id="CHEBI:456216"/>
        <dbReference type="EC" id="2.7.4.6"/>
    </reaction>
</comment>
<comment type="catalytic activity">
    <reaction evidence="1">
        <text>a ribonucleoside 5'-diphosphate + ATP = a ribonucleoside 5'-triphosphate + ADP</text>
        <dbReference type="Rhea" id="RHEA:18113"/>
        <dbReference type="ChEBI" id="CHEBI:30616"/>
        <dbReference type="ChEBI" id="CHEBI:57930"/>
        <dbReference type="ChEBI" id="CHEBI:61557"/>
        <dbReference type="ChEBI" id="CHEBI:456216"/>
        <dbReference type="EC" id="2.7.4.6"/>
    </reaction>
</comment>
<comment type="cofactor">
    <cofactor evidence="1">
        <name>Mg(2+)</name>
        <dbReference type="ChEBI" id="CHEBI:18420"/>
    </cofactor>
</comment>
<comment type="subunit">
    <text evidence="1">Homotetramer.</text>
</comment>
<comment type="subcellular location">
    <subcellularLocation>
        <location evidence="1">Cytoplasm</location>
    </subcellularLocation>
</comment>
<comment type="similarity">
    <text evidence="1">Belongs to the NDK family.</text>
</comment>
<name>NDK_PROM9</name>
<dbReference type="EC" id="2.7.4.6" evidence="1"/>
<dbReference type="EMBL" id="CP000111">
    <property type="protein sequence ID" value="ABB49108.1"/>
    <property type="molecule type" value="Genomic_DNA"/>
</dbReference>
<dbReference type="RefSeq" id="WP_011375612.1">
    <property type="nucleotide sequence ID" value="NC_007577.1"/>
</dbReference>
<dbReference type="SMR" id="Q31DD7"/>
<dbReference type="STRING" id="74546.PMT9312_0047"/>
<dbReference type="KEGG" id="pmi:PMT9312_0047"/>
<dbReference type="eggNOG" id="COG0105">
    <property type="taxonomic scope" value="Bacteria"/>
</dbReference>
<dbReference type="HOGENOM" id="CLU_060216_6_3_3"/>
<dbReference type="OrthoDB" id="9801161at2"/>
<dbReference type="Proteomes" id="UP000002715">
    <property type="component" value="Chromosome"/>
</dbReference>
<dbReference type="GO" id="GO:0005737">
    <property type="term" value="C:cytoplasm"/>
    <property type="evidence" value="ECO:0007669"/>
    <property type="project" value="UniProtKB-SubCell"/>
</dbReference>
<dbReference type="GO" id="GO:0005524">
    <property type="term" value="F:ATP binding"/>
    <property type="evidence" value="ECO:0007669"/>
    <property type="project" value="UniProtKB-UniRule"/>
</dbReference>
<dbReference type="GO" id="GO:0046872">
    <property type="term" value="F:metal ion binding"/>
    <property type="evidence" value="ECO:0007669"/>
    <property type="project" value="UniProtKB-KW"/>
</dbReference>
<dbReference type="GO" id="GO:0004550">
    <property type="term" value="F:nucleoside diphosphate kinase activity"/>
    <property type="evidence" value="ECO:0007669"/>
    <property type="project" value="UniProtKB-UniRule"/>
</dbReference>
<dbReference type="GO" id="GO:0006241">
    <property type="term" value="P:CTP biosynthetic process"/>
    <property type="evidence" value="ECO:0007669"/>
    <property type="project" value="UniProtKB-UniRule"/>
</dbReference>
<dbReference type="GO" id="GO:0006183">
    <property type="term" value="P:GTP biosynthetic process"/>
    <property type="evidence" value="ECO:0007669"/>
    <property type="project" value="UniProtKB-UniRule"/>
</dbReference>
<dbReference type="GO" id="GO:0006228">
    <property type="term" value="P:UTP biosynthetic process"/>
    <property type="evidence" value="ECO:0007669"/>
    <property type="project" value="UniProtKB-UniRule"/>
</dbReference>
<dbReference type="CDD" id="cd04413">
    <property type="entry name" value="NDPk_I"/>
    <property type="match status" value="1"/>
</dbReference>
<dbReference type="FunFam" id="3.30.70.141:FF:000002">
    <property type="entry name" value="Nucleoside diphosphate kinase"/>
    <property type="match status" value="1"/>
</dbReference>
<dbReference type="Gene3D" id="3.30.70.141">
    <property type="entry name" value="Nucleoside diphosphate kinase-like domain"/>
    <property type="match status" value="1"/>
</dbReference>
<dbReference type="HAMAP" id="MF_00451">
    <property type="entry name" value="NDP_kinase"/>
    <property type="match status" value="1"/>
</dbReference>
<dbReference type="InterPro" id="IPR034907">
    <property type="entry name" value="NDK-like_dom"/>
</dbReference>
<dbReference type="InterPro" id="IPR036850">
    <property type="entry name" value="NDK-like_dom_sf"/>
</dbReference>
<dbReference type="InterPro" id="IPR001564">
    <property type="entry name" value="Nucleoside_diP_kinase"/>
</dbReference>
<dbReference type="InterPro" id="IPR023005">
    <property type="entry name" value="Nucleoside_diP_kinase_AS"/>
</dbReference>
<dbReference type="NCBIfam" id="NF001908">
    <property type="entry name" value="PRK00668.1"/>
    <property type="match status" value="1"/>
</dbReference>
<dbReference type="PANTHER" id="PTHR11349">
    <property type="entry name" value="NUCLEOSIDE DIPHOSPHATE KINASE"/>
    <property type="match status" value="1"/>
</dbReference>
<dbReference type="Pfam" id="PF00334">
    <property type="entry name" value="NDK"/>
    <property type="match status" value="1"/>
</dbReference>
<dbReference type="PRINTS" id="PR01243">
    <property type="entry name" value="NUCDPKINASE"/>
</dbReference>
<dbReference type="SMART" id="SM00562">
    <property type="entry name" value="NDK"/>
    <property type="match status" value="1"/>
</dbReference>
<dbReference type="SUPFAM" id="SSF54919">
    <property type="entry name" value="Nucleoside diphosphate kinase, NDK"/>
    <property type="match status" value="1"/>
</dbReference>
<dbReference type="PROSITE" id="PS00469">
    <property type="entry name" value="NDPK"/>
    <property type="match status" value="1"/>
</dbReference>
<dbReference type="PROSITE" id="PS51374">
    <property type="entry name" value="NDPK_LIKE"/>
    <property type="match status" value="1"/>
</dbReference>
<gene>
    <name evidence="1" type="primary">ndk</name>
    <name type="ordered locus">PMT9312_0047</name>
</gene>
<protein>
    <recommendedName>
        <fullName evidence="1">Nucleoside diphosphate kinase</fullName>
        <shortName evidence="1">NDK</shortName>
        <shortName evidence="1">NDP kinase</shortName>
        <ecNumber evidence="1">2.7.4.6</ecNumber>
    </recommendedName>
    <alternativeName>
        <fullName evidence="1">Nucleoside-2-P kinase</fullName>
    </alternativeName>
</protein>
<proteinExistence type="inferred from homology"/>
<accession>Q31DD7</accession>
<reference key="1">
    <citation type="journal article" date="2006" name="Science">
        <title>Genomic islands and the ecology and evolution of Prochlorococcus.</title>
        <authorList>
            <person name="Coleman M.L."/>
            <person name="Sullivan M.B."/>
            <person name="Martiny A.C."/>
            <person name="Steglich C."/>
            <person name="Barry K."/>
            <person name="Delong E.F."/>
            <person name="Chisholm S.W."/>
        </authorList>
    </citation>
    <scope>NUCLEOTIDE SEQUENCE [LARGE SCALE GENOMIC DNA]</scope>
    <source>
        <strain>MIT 9312</strain>
    </source>
</reference>
<sequence>MTKERTFIAIKPDGVQRGYVSEIIGRFEKKGFKLVGLKQLIPSKDLAQNHYGVHRERPFFGDLVDFISSGPVVAMVWEGEGVILSARKLIGATKPLEAEPGTIRGDLAIDIGRNIIHGSDGEDTAKFEIDLWFNEEELCEWYTSDSKWRSEN</sequence>
<evidence type="ECO:0000255" key="1">
    <source>
        <dbReference type="HAMAP-Rule" id="MF_00451"/>
    </source>
</evidence>
<keyword id="KW-0067">ATP-binding</keyword>
<keyword id="KW-0963">Cytoplasm</keyword>
<keyword id="KW-0418">Kinase</keyword>
<keyword id="KW-0460">Magnesium</keyword>
<keyword id="KW-0479">Metal-binding</keyword>
<keyword id="KW-0546">Nucleotide metabolism</keyword>
<keyword id="KW-0547">Nucleotide-binding</keyword>
<keyword id="KW-0597">Phosphoprotein</keyword>
<keyword id="KW-0808">Transferase</keyword>